<sequence length="231" mass="27887">MEKSERPLIKKKRPFRKKKRSFRKRRSPIESGHQIDFTNTSLLNQFISQQGKILPRKVTRLTLKQQRFMTSAIKQARILSLLPFVFDDKKVKKKQKEEFQKKQKEEFQKKQKEEFQKKQKEEFQKKQKEEFQKKQKEEFQKKQFQKKEFQRTKSTARTTNEKQTNEKQTKSTARTTNEKQTKSTARTTNEKQTKSTARTTNEKQTKSTARTTNEKQTKSNDRTTDLRTRKK</sequence>
<feature type="chain" id="PRO_0000276873" description="Small ribosomal subunit protein bS18c">
    <location>
        <begin position="1"/>
        <end position="231"/>
    </location>
</feature>
<feature type="region of interest" description="Disordered" evidence="2">
    <location>
        <begin position="1"/>
        <end position="31"/>
    </location>
</feature>
<feature type="region of interest" description="Disordered" evidence="2">
    <location>
        <begin position="95"/>
        <end position="231"/>
    </location>
</feature>
<feature type="compositionally biased region" description="Basic residues" evidence="2">
    <location>
        <begin position="9"/>
        <end position="26"/>
    </location>
</feature>
<feature type="compositionally biased region" description="Basic and acidic residues" evidence="2">
    <location>
        <begin position="95"/>
        <end position="151"/>
    </location>
</feature>
<feature type="compositionally biased region" description="Basic and acidic residues" evidence="2">
    <location>
        <begin position="159"/>
        <end position="169"/>
    </location>
</feature>
<feature type="compositionally biased region" description="Basic and acidic residues" evidence="2">
    <location>
        <begin position="212"/>
        <end position="231"/>
    </location>
</feature>
<protein>
    <recommendedName>
        <fullName evidence="1">Small ribosomal subunit protein bS18c</fullName>
    </recommendedName>
    <alternativeName>
        <fullName evidence="3">30S ribosomal protein S18, chloroplastic</fullName>
    </alternativeName>
</protein>
<organism>
    <name type="scientific">Jasminum nudiflorum</name>
    <name type="common">Winter jasmine</name>
    <dbReference type="NCBI Taxonomy" id="126431"/>
    <lineage>
        <taxon>Eukaryota</taxon>
        <taxon>Viridiplantae</taxon>
        <taxon>Streptophyta</taxon>
        <taxon>Embryophyta</taxon>
        <taxon>Tracheophyta</taxon>
        <taxon>Spermatophyta</taxon>
        <taxon>Magnoliopsida</taxon>
        <taxon>eudicotyledons</taxon>
        <taxon>Gunneridae</taxon>
        <taxon>Pentapetalae</taxon>
        <taxon>asterids</taxon>
        <taxon>lamiids</taxon>
        <taxon>Lamiales</taxon>
        <taxon>Oleaceae</taxon>
        <taxon>Jasmineae</taxon>
        <taxon>Jasminum</taxon>
    </lineage>
</organism>
<dbReference type="EMBL" id="DQ673255">
    <property type="protein sequence ID" value="ABG74649.1"/>
    <property type="molecule type" value="Genomic_DNA"/>
</dbReference>
<dbReference type="RefSeq" id="YP_778511.1">
    <property type="nucleotide sequence ID" value="NC_008407.1"/>
</dbReference>
<dbReference type="SMR" id="Q06RB0"/>
<dbReference type="GeneID" id="4319730"/>
<dbReference type="GO" id="GO:0009507">
    <property type="term" value="C:chloroplast"/>
    <property type="evidence" value="ECO:0007669"/>
    <property type="project" value="UniProtKB-SubCell"/>
</dbReference>
<dbReference type="GO" id="GO:0005763">
    <property type="term" value="C:mitochondrial small ribosomal subunit"/>
    <property type="evidence" value="ECO:0007669"/>
    <property type="project" value="TreeGrafter"/>
</dbReference>
<dbReference type="GO" id="GO:0070181">
    <property type="term" value="F:small ribosomal subunit rRNA binding"/>
    <property type="evidence" value="ECO:0007669"/>
    <property type="project" value="TreeGrafter"/>
</dbReference>
<dbReference type="GO" id="GO:0003735">
    <property type="term" value="F:structural constituent of ribosome"/>
    <property type="evidence" value="ECO:0007669"/>
    <property type="project" value="InterPro"/>
</dbReference>
<dbReference type="GO" id="GO:0006412">
    <property type="term" value="P:translation"/>
    <property type="evidence" value="ECO:0007669"/>
    <property type="project" value="UniProtKB-UniRule"/>
</dbReference>
<dbReference type="FunFam" id="4.10.640.10:FF:000002">
    <property type="entry name" value="30S ribosomal protein S18, chloroplastic"/>
    <property type="match status" value="1"/>
</dbReference>
<dbReference type="Gene3D" id="4.10.640.10">
    <property type="entry name" value="Ribosomal protein S18"/>
    <property type="match status" value="1"/>
</dbReference>
<dbReference type="HAMAP" id="MF_00270">
    <property type="entry name" value="Ribosomal_bS18"/>
    <property type="match status" value="1"/>
</dbReference>
<dbReference type="InterPro" id="IPR001648">
    <property type="entry name" value="Ribosomal_bS18"/>
</dbReference>
<dbReference type="InterPro" id="IPR036870">
    <property type="entry name" value="Ribosomal_bS18_sf"/>
</dbReference>
<dbReference type="NCBIfam" id="TIGR00165">
    <property type="entry name" value="S18"/>
    <property type="match status" value="1"/>
</dbReference>
<dbReference type="PANTHER" id="PTHR13479">
    <property type="entry name" value="30S RIBOSOMAL PROTEIN S18"/>
    <property type="match status" value="1"/>
</dbReference>
<dbReference type="PANTHER" id="PTHR13479:SF40">
    <property type="entry name" value="SMALL RIBOSOMAL SUBUNIT PROTEIN BS18M"/>
    <property type="match status" value="1"/>
</dbReference>
<dbReference type="Pfam" id="PF01084">
    <property type="entry name" value="Ribosomal_S18"/>
    <property type="match status" value="1"/>
</dbReference>
<dbReference type="PRINTS" id="PR00974">
    <property type="entry name" value="RIBOSOMALS18"/>
</dbReference>
<dbReference type="SUPFAM" id="SSF46911">
    <property type="entry name" value="Ribosomal protein S18"/>
    <property type="match status" value="1"/>
</dbReference>
<gene>
    <name evidence="1" type="primary">rps18</name>
    <name type="ORF">JNC0746</name>
</gene>
<accession>Q06RB0</accession>
<reference key="1">
    <citation type="journal article" date="2007" name="Mol. Biol. Evol.">
        <title>Gene relocations within chloroplast genomes of Jasminum and Menodora (Oleaceae) are due to multiple, overlapping inversions.</title>
        <authorList>
            <person name="Lee H.-L."/>
            <person name="Jansen R.K."/>
            <person name="Chumley T.W."/>
            <person name="Kim K.-J."/>
        </authorList>
    </citation>
    <scope>NUCLEOTIDE SEQUENCE [LARGE SCALE GENOMIC DNA]</scope>
</reference>
<geneLocation type="chloroplast"/>
<proteinExistence type="inferred from homology"/>
<comment type="subunit">
    <text>Part of the 30S ribosomal subunit.</text>
</comment>
<comment type="subcellular location">
    <subcellularLocation>
        <location>Plastid</location>
        <location>Chloroplast</location>
    </subcellularLocation>
</comment>
<comment type="similarity">
    <text evidence="1">Belongs to the bacterial ribosomal protein bS18 family.</text>
</comment>
<name>RR18_JASNU</name>
<evidence type="ECO:0000255" key="1">
    <source>
        <dbReference type="HAMAP-Rule" id="MF_00270"/>
    </source>
</evidence>
<evidence type="ECO:0000256" key="2">
    <source>
        <dbReference type="SAM" id="MobiDB-lite"/>
    </source>
</evidence>
<evidence type="ECO:0000305" key="3"/>
<keyword id="KW-0150">Chloroplast</keyword>
<keyword id="KW-0934">Plastid</keyword>
<keyword id="KW-0687">Ribonucleoprotein</keyword>
<keyword id="KW-0689">Ribosomal protein</keyword>
<keyword id="KW-0694">RNA-binding</keyword>
<keyword id="KW-0699">rRNA-binding</keyword>